<comment type="function">
    <text evidence="1">The glycine cleavage system catalyzes the degradation of glycine.</text>
</comment>
<comment type="catalytic activity">
    <reaction evidence="1">
        <text>N(6)-[(R)-S(8)-aminomethyldihydrolipoyl]-L-lysyl-[protein] + (6S)-5,6,7,8-tetrahydrofolate = N(6)-[(R)-dihydrolipoyl]-L-lysyl-[protein] + (6R)-5,10-methylene-5,6,7,8-tetrahydrofolate + NH4(+)</text>
        <dbReference type="Rhea" id="RHEA:16945"/>
        <dbReference type="Rhea" id="RHEA-COMP:10475"/>
        <dbReference type="Rhea" id="RHEA-COMP:10492"/>
        <dbReference type="ChEBI" id="CHEBI:15636"/>
        <dbReference type="ChEBI" id="CHEBI:28938"/>
        <dbReference type="ChEBI" id="CHEBI:57453"/>
        <dbReference type="ChEBI" id="CHEBI:83100"/>
        <dbReference type="ChEBI" id="CHEBI:83143"/>
        <dbReference type="EC" id="2.1.2.10"/>
    </reaction>
</comment>
<comment type="subunit">
    <text evidence="1">The glycine cleavage system is composed of four proteins: P, T, L and H.</text>
</comment>
<comment type="similarity">
    <text evidence="1">Belongs to the GcvT family.</text>
</comment>
<sequence>MADLKKTPLYGEHVAAGAKMVEFGGWLMPVQYSSIIEEHQRVRNCAGLFDVSHMGEITIKGPDALALVQKLLTNDADRATGDRVIYSPMCYPDGGVVDDLLVYPRGEGEYLLVVNAGNIDKDFAWIQENASGFRVEVSNISAATAQLALQGPRALEILRPLTRVDLASLGYYRWTEGQVLGVHCLISRTGYTGEDGFELYFEAAAAPTMWRNILAAGREAGLVPAGLGARDTLRLEAALPLYGHELGPDISPLEAGLHRFVRLEKGEFNGREALAAQREAGVRRQLVGLTMIDRGIPRPEYPVLAAGKEIGYVTSGSLAPTLGQNIALALVAAGTVSTGGEVEVSIRGRVNRARVVKLPFYRRPKK</sequence>
<keyword id="KW-0032">Aminotransferase</keyword>
<keyword id="KW-0808">Transferase</keyword>
<organism>
    <name type="scientific">Moorella thermoacetica (strain ATCC 39073 / JCM 9320)</name>
    <dbReference type="NCBI Taxonomy" id="264732"/>
    <lineage>
        <taxon>Bacteria</taxon>
        <taxon>Bacillati</taxon>
        <taxon>Bacillota</taxon>
        <taxon>Clostridia</taxon>
        <taxon>Moorellales</taxon>
        <taxon>Moorellaceae</taxon>
        <taxon>Moorella</taxon>
    </lineage>
</organism>
<name>GCST_MOOTA</name>
<accession>Q2RH46</accession>
<evidence type="ECO:0000255" key="1">
    <source>
        <dbReference type="HAMAP-Rule" id="MF_00259"/>
    </source>
</evidence>
<proteinExistence type="inferred from homology"/>
<gene>
    <name evidence="1" type="primary">gcvT</name>
    <name type="ordered locus">Moth_1945</name>
</gene>
<reference key="1">
    <citation type="journal article" date="2008" name="Environ. Microbiol.">
        <title>The complete genome sequence of Moorella thermoacetica (f. Clostridium thermoaceticum).</title>
        <authorList>
            <person name="Pierce E."/>
            <person name="Xie G."/>
            <person name="Barabote R.D."/>
            <person name="Saunders E."/>
            <person name="Han C.S."/>
            <person name="Detter J.C."/>
            <person name="Richardson P."/>
            <person name="Brettin T.S."/>
            <person name="Das A."/>
            <person name="Ljungdahl L.G."/>
            <person name="Ragsdale S.W."/>
        </authorList>
    </citation>
    <scope>NUCLEOTIDE SEQUENCE [LARGE SCALE GENOMIC DNA]</scope>
    <source>
        <strain>ATCC 39073 / JCM 9320</strain>
    </source>
</reference>
<dbReference type="EC" id="2.1.2.10" evidence="1"/>
<dbReference type="EMBL" id="CP000232">
    <property type="protein sequence ID" value="ABC20243.1"/>
    <property type="molecule type" value="Genomic_DNA"/>
</dbReference>
<dbReference type="RefSeq" id="YP_430786.1">
    <property type="nucleotide sequence ID" value="NC_007644.1"/>
</dbReference>
<dbReference type="SMR" id="Q2RH46"/>
<dbReference type="STRING" id="264732.Moth_1945"/>
<dbReference type="EnsemblBacteria" id="ABC20243">
    <property type="protein sequence ID" value="ABC20243"/>
    <property type="gene ID" value="Moth_1945"/>
</dbReference>
<dbReference type="KEGG" id="mta:Moth_1945"/>
<dbReference type="PATRIC" id="fig|264732.11.peg.2108"/>
<dbReference type="eggNOG" id="COG0404">
    <property type="taxonomic scope" value="Bacteria"/>
</dbReference>
<dbReference type="HOGENOM" id="CLU_007884_10_2_9"/>
<dbReference type="OrthoDB" id="9774591at2"/>
<dbReference type="GO" id="GO:0005829">
    <property type="term" value="C:cytosol"/>
    <property type="evidence" value="ECO:0007669"/>
    <property type="project" value="TreeGrafter"/>
</dbReference>
<dbReference type="GO" id="GO:0005960">
    <property type="term" value="C:glycine cleavage complex"/>
    <property type="evidence" value="ECO:0007669"/>
    <property type="project" value="InterPro"/>
</dbReference>
<dbReference type="GO" id="GO:0004047">
    <property type="term" value="F:aminomethyltransferase activity"/>
    <property type="evidence" value="ECO:0007669"/>
    <property type="project" value="UniProtKB-UniRule"/>
</dbReference>
<dbReference type="GO" id="GO:0008483">
    <property type="term" value="F:transaminase activity"/>
    <property type="evidence" value="ECO:0007669"/>
    <property type="project" value="UniProtKB-KW"/>
</dbReference>
<dbReference type="GO" id="GO:0019464">
    <property type="term" value="P:glycine decarboxylation via glycine cleavage system"/>
    <property type="evidence" value="ECO:0007669"/>
    <property type="project" value="UniProtKB-UniRule"/>
</dbReference>
<dbReference type="FunFam" id="2.40.30.110:FF:000003">
    <property type="entry name" value="Aminomethyltransferase"/>
    <property type="match status" value="1"/>
</dbReference>
<dbReference type="FunFam" id="3.30.70.1400:FF:000001">
    <property type="entry name" value="Aminomethyltransferase"/>
    <property type="match status" value="1"/>
</dbReference>
<dbReference type="Gene3D" id="2.40.30.110">
    <property type="entry name" value="Aminomethyltransferase beta-barrel domains"/>
    <property type="match status" value="1"/>
</dbReference>
<dbReference type="Gene3D" id="3.30.70.1400">
    <property type="entry name" value="Aminomethyltransferase beta-barrel domains"/>
    <property type="match status" value="1"/>
</dbReference>
<dbReference type="Gene3D" id="4.10.1250.10">
    <property type="entry name" value="Aminomethyltransferase fragment"/>
    <property type="match status" value="1"/>
</dbReference>
<dbReference type="Gene3D" id="3.30.1360.120">
    <property type="entry name" value="Probable tRNA modification gtpase trme, domain 1"/>
    <property type="match status" value="1"/>
</dbReference>
<dbReference type="HAMAP" id="MF_00259">
    <property type="entry name" value="GcvT"/>
    <property type="match status" value="1"/>
</dbReference>
<dbReference type="InterPro" id="IPR006223">
    <property type="entry name" value="GCS_T"/>
</dbReference>
<dbReference type="InterPro" id="IPR022903">
    <property type="entry name" value="GCS_T_bac"/>
</dbReference>
<dbReference type="InterPro" id="IPR013977">
    <property type="entry name" value="GCST_C"/>
</dbReference>
<dbReference type="InterPro" id="IPR006222">
    <property type="entry name" value="GCV_T_N"/>
</dbReference>
<dbReference type="InterPro" id="IPR028896">
    <property type="entry name" value="GcvT/YgfZ/DmdA"/>
</dbReference>
<dbReference type="InterPro" id="IPR029043">
    <property type="entry name" value="GcvT/YgfZ_C"/>
</dbReference>
<dbReference type="InterPro" id="IPR027266">
    <property type="entry name" value="TrmE/GcvT_dom1"/>
</dbReference>
<dbReference type="NCBIfam" id="TIGR00528">
    <property type="entry name" value="gcvT"/>
    <property type="match status" value="1"/>
</dbReference>
<dbReference type="NCBIfam" id="NF001567">
    <property type="entry name" value="PRK00389.1"/>
    <property type="match status" value="1"/>
</dbReference>
<dbReference type="PANTHER" id="PTHR43757">
    <property type="entry name" value="AMINOMETHYLTRANSFERASE"/>
    <property type="match status" value="1"/>
</dbReference>
<dbReference type="PANTHER" id="PTHR43757:SF2">
    <property type="entry name" value="AMINOMETHYLTRANSFERASE, MITOCHONDRIAL"/>
    <property type="match status" value="1"/>
</dbReference>
<dbReference type="Pfam" id="PF01571">
    <property type="entry name" value="GCV_T"/>
    <property type="match status" value="1"/>
</dbReference>
<dbReference type="Pfam" id="PF08669">
    <property type="entry name" value="GCV_T_C"/>
    <property type="match status" value="1"/>
</dbReference>
<dbReference type="PIRSF" id="PIRSF006487">
    <property type="entry name" value="GcvT"/>
    <property type="match status" value="1"/>
</dbReference>
<dbReference type="SUPFAM" id="SSF101790">
    <property type="entry name" value="Aminomethyltransferase beta-barrel domain"/>
    <property type="match status" value="1"/>
</dbReference>
<dbReference type="SUPFAM" id="SSF103025">
    <property type="entry name" value="Folate-binding domain"/>
    <property type="match status" value="1"/>
</dbReference>
<feature type="chain" id="PRO_1000059087" description="Aminomethyltransferase">
    <location>
        <begin position="1"/>
        <end position="366"/>
    </location>
</feature>
<protein>
    <recommendedName>
        <fullName evidence="1">Aminomethyltransferase</fullName>
        <ecNumber evidence="1">2.1.2.10</ecNumber>
    </recommendedName>
    <alternativeName>
        <fullName evidence="1">Glycine cleavage system T protein</fullName>
    </alternativeName>
</protein>